<reference key="1">
    <citation type="submission" date="2005-06" db="EMBL/GenBank/DDBJ databases">
        <title>DNA sequences of macaque genes expressed in brain or testis and its evolutionary implications.</title>
        <authorList>
            <consortium name="International consortium for macaque cDNA sequencing and analysis"/>
        </authorList>
    </citation>
    <scope>NUCLEOTIDE SEQUENCE [LARGE SCALE MRNA]</scope>
    <source>
        <tissue>Parietal cortex</tissue>
    </source>
</reference>
<name>SCG2_MACFA</name>
<evidence type="ECO:0000250" key="1"/>
<evidence type="ECO:0000250" key="2">
    <source>
        <dbReference type="UniProtKB" id="P10362"/>
    </source>
</evidence>
<evidence type="ECO:0000250" key="3">
    <source>
        <dbReference type="UniProtKB" id="P13521"/>
    </source>
</evidence>
<evidence type="ECO:0000250" key="4">
    <source>
        <dbReference type="UniProtKB" id="P30945"/>
    </source>
</evidence>
<evidence type="ECO:0000250" key="5">
    <source>
        <dbReference type="UniProtKB" id="Q03517"/>
    </source>
</evidence>
<evidence type="ECO:0000255" key="6"/>
<evidence type="ECO:0000256" key="7">
    <source>
        <dbReference type="SAM" id="MobiDB-lite"/>
    </source>
</evidence>
<evidence type="ECO:0000305" key="8"/>
<comment type="function">
    <text evidence="3">Neuroendocrine protein of the granin family that regulates the biogenesis of secretory granules.</text>
</comment>
<comment type="subunit">
    <text evidence="3">Interacts with Secretogranin III/SCG3.</text>
</comment>
<comment type="subcellular location">
    <subcellularLocation>
        <location>Secreted</location>
    </subcellularLocation>
    <text evidence="1">Neuroendocrine and endocrine secretory granules.</text>
</comment>
<comment type="miscellaneous">
    <text evidence="1">Binds calcium with a low-affinity.</text>
</comment>
<comment type="similarity">
    <text evidence="8">Belongs to the chromogranin/secretogranin protein family.</text>
</comment>
<organism>
    <name type="scientific">Macaca fascicularis</name>
    <name type="common">Crab-eating macaque</name>
    <name type="synonym">Cynomolgus monkey</name>
    <dbReference type="NCBI Taxonomy" id="9541"/>
    <lineage>
        <taxon>Eukaryota</taxon>
        <taxon>Metazoa</taxon>
        <taxon>Chordata</taxon>
        <taxon>Craniata</taxon>
        <taxon>Vertebrata</taxon>
        <taxon>Euteleostomi</taxon>
        <taxon>Mammalia</taxon>
        <taxon>Eutheria</taxon>
        <taxon>Euarchontoglires</taxon>
        <taxon>Primates</taxon>
        <taxon>Haplorrhini</taxon>
        <taxon>Catarrhini</taxon>
        <taxon>Cercopithecidae</taxon>
        <taxon>Cercopithecinae</taxon>
        <taxon>Macaca</taxon>
    </lineage>
</organism>
<protein>
    <recommendedName>
        <fullName>Secretogranin-2</fullName>
    </recommendedName>
    <alternativeName>
        <fullName>Secretogranin II</fullName>
        <shortName>SgII</shortName>
    </alternativeName>
    <component>
        <recommendedName>
            <fullName>Secretoneurin</fullName>
            <shortName>SN</shortName>
        </recommendedName>
    </component>
    <component>
        <recommendedName>
            <fullName>Manserin</fullName>
        </recommendedName>
    </component>
</protein>
<gene>
    <name type="primary">SCG2</name>
    <name type="ORF">QnpA-15483</name>
</gene>
<accession>Q4R5E9</accession>
<keyword id="KW-0106">Calcium</keyword>
<keyword id="KW-0165">Cleavage on pair of basic residues</keyword>
<keyword id="KW-0597">Phosphoprotein</keyword>
<keyword id="KW-1185">Reference proteome</keyword>
<keyword id="KW-0964">Secreted</keyword>
<keyword id="KW-0732">Signal</keyword>
<keyword id="KW-0765">Sulfation</keyword>
<dbReference type="EMBL" id="AB169594">
    <property type="protein sequence ID" value="BAE01676.1"/>
    <property type="molecule type" value="mRNA"/>
</dbReference>
<dbReference type="RefSeq" id="NP_001271543.1">
    <property type="nucleotide sequence ID" value="NM_001284614.1"/>
</dbReference>
<dbReference type="SMR" id="Q4R5E9"/>
<dbReference type="eggNOG" id="ENOG502QV5W">
    <property type="taxonomic scope" value="Eukaryota"/>
</dbReference>
<dbReference type="Proteomes" id="UP000233100">
    <property type="component" value="Unplaced"/>
</dbReference>
<dbReference type="GO" id="GO:0005615">
    <property type="term" value="C:extracellular space"/>
    <property type="evidence" value="ECO:0007669"/>
    <property type="project" value="TreeGrafter"/>
</dbReference>
<dbReference type="GO" id="GO:0030141">
    <property type="term" value="C:secretory granule"/>
    <property type="evidence" value="ECO:0007669"/>
    <property type="project" value="InterPro"/>
</dbReference>
<dbReference type="GO" id="GO:0042056">
    <property type="term" value="F:chemoattractant activity"/>
    <property type="evidence" value="ECO:0007669"/>
    <property type="project" value="TreeGrafter"/>
</dbReference>
<dbReference type="GO" id="GO:0005125">
    <property type="term" value="F:cytokine activity"/>
    <property type="evidence" value="ECO:0007669"/>
    <property type="project" value="TreeGrafter"/>
</dbReference>
<dbReference type="GO" id="GO:0001525">
    <property type="term" value="P:angiogenesis"/>
    <property type="evidence" value="ECO:0007669"/>
    <property type="project" value="TreeGrafter"/>
</dbReference>
<dbReference type="GO" id="GO:0048245">
    <property type="term" value="P:eosinophil chemotaxis"/>
    <property type="evidence" value="ECO:0007669"/>
    <property type="project" value="TreeGrafter"/>
</dbReference>
<dbReference type="InterPro" id="IPR018054">
    <property type="entry name" value="Chromogranin_CS"/>
</dbReference>
<dbReference type="InterPro" id="IPR001990">
    <property type="entry name" value="Granin"/>
</dbReference>
<dbReference type="InterPro" id="IPR038858">
    <property type="entry name" value="ScgII"/>
</dbReference>
<dbReference type="PANTHER" id="PTHR15119">
    <property type="entry name" value="SECRETOGRANIN II"/>
    <property type="match status" value="1"/>
</dbReference>
<dbReference type="PANTHER" id="PTHR15119:SF0">
    <property type="entry name" value="SECRETOGRANIN-2"/>
    <property type="match status" value="1"/>
</dbReference>
<dbReference type="Pfam" id="PF01271">
    <property type="entry name" value="Granin"/>
    <property type="match status" value="1"/>
</dbReference>
<dbReference type="PROSITE" id="PS00422">
    <property type="entry name" value="GRANINS_1"/>
    <property type="match status" value="1"/>
</dbReference>
<proteinExistence type="evidence at transcript level"/>
<feature type="signal peptide" evidence="6">
    <location>
        <begin position="1"/>
        <end position="27"/>
    </location>
</feature>
<feature type="propeptide" id="PRO_0000352311" evidence="6">
    <location>
        <begin position="28"/>
        <end position="30"/>
    </location>
</feature>
<feature type="chain" id="PRO_0000352312" description="Secretogranin-2">
    <location>
        <begin position="31"/>
        <end position="617"/>
    </location>
</feature>
<feature type="peptide" id="PRO_0000352313" description="Secretoneurin" evidence="4">
    <location>
        <begin position="182"/>
        <end position="214"/>
    </location>
</feature>
<feature type="peptide" id="PRO_0000432736" description="Manserin" evidence="2">
    <location>
        <begin position="527"/>
        <end position="566"/>
    </location>
</feature>
<feature type="region of interest" description="Disordered" evidence="7">
    <location>
        <begin position="123"/>
        <end position="147"/>
    </location>
</feature>
<feature type="region of interest" description="Disordered" evidence="7">
    <location>
        <begin position="552"/>
        <end position="583"/>
    </location>
</feature>
<feature type="modified residue" description="Sulfotyrosine" evidence="3">
    <location>
        <position position="151"/>
    </location>
</feature>
<feature type="modified residue" description="Phosphoserine" evidence="2">
    <location>
        <position position="174"/>
    </location>
</feature>
<feature type="modified residue" description="Phosphoserine" evidence="2">
    <location>
        <position position="268"/>
    </location>
</feature>
<feature type="modified residue" description="Phosphoserine" evidence="2">
    <location>
        <position position="432"/>
    </location>
</feature>
<feature type="modified residue" description="Phosphoserine" evidence="5">
    <location>
        <position position="532"/>
    </location>
</feature>
<feature type="modified residue" description="Phosphoserine" evidence="5">
    <location>
        <position position="555"/>
    </location>
</feature>
<feature type="modified residue" description="Phosphoserine" evidence="5">
    <location>
        <position position="556"/>
    </location>
</feature>
<sequence length="617" mass="70918">MAEAKTHWLGAALSLIPLIFLISGAEAASFQRNQLLQKEPDLRLENVQKFPSPEMIRALEYIEKLRQQAHKEESSPDYNPYQGVSIPLQQKENGDESHLPERDSLSEEDWMRIILEALRQVENEPQSVPKENKPHALNSEKNFPIDMSDDYETQQWPERKLKHMQFPPMYEENSRDNPFKRTNEIVEEQYTPQSLATLESVFQELGKLTGPNNQKRERMDEEQKLYTDDEDDIYKANNIAYEDVVGGEDWNPVEEKIESQTQEEVRDSKENTEKNEQINDEVKRSGQLGIQEEDLRKESKDQLSDDVSKVITYLKRLVNAAGSGRLQNGQNGERATRLFEKPLDSQSIYQLIEISRNLQIPPEDLIEMLKTGEKPNGSVEPERELDLPVDLDDISEADLDHPDLFQNKMLSKSGYPKTVGRAGTEALPDGLSVEDILNLLGMESAANQKTSYFPNPYNQEKVLPRLPYGPGRSRSNQLPKAAWMPYVENRQMAYENLNDKDQELGEYLARMLVKYPEIINSNQVKRVPGQGSPEDDLQEEEQIEQAIKEHLNQGSSQETDKLAPVSKRFPVGPPKNDDTPNRQYLDEDLLTKVLEYLNQEKAEKGREHIAKRAMENM</sequence>